<proteinExistence type="evidence at protein level"/>
<organism>
    <name type="scientific">Escherichia coli (strain K12)</name>
    <dbReference type="NCBI Taxonomy" id="83333"/>
    <lineage>
        <taxon>Bacteria</taxon>
        <taxon>Pseudomonadati</taxon>
        <taxon>Pseudomonadota</taxon>
        <taxon>Gammaproteobacteria</taxon>
        <taxon>Enterobacterales</taxon>
        <taxon>Enterobacteriaceae</taxon>
        <taxon>Escherichia</taxon>
    </lineage>
</organism>
<accession>P69824</accession>
<accession>P32058</accession>
<accession>Q2M9Q9</accession>
<name>PTMA_ECOLI</name>
<keyword id="KW-0002">3D-structure</keyword>
<keyword id="KW-0963">Cytoplasm</keyword>
<keyword id="KW-0418">Kinase</keyword>
<keyword id="KW-0597">Phosphoprotein</keyword>
<keyword id="KW-0598">Phosphotransferase system</keyword>
<keyword id="KW-1185">Reference proteome</keyword>
<keyword id="KW-0762">Sugar transport</keyword>
<keyword id="KW-0808">Transferase</keyword>
<keyword id="KW-0813">Transport</keyword>
<protein>
    <recommendedName>
        <fullName evidence="3">Mannitol-specific cryptic phosphotransferase enzyme IIA component</fullName>
    </recommendedName>
    <alternativeName>
        <fullName evidence="1">EIIA-Mtl</fullName>
    </alternativeName>
    <alternativeName>
        <fullName evidence="1">EIII-Mtl</fullName>
    </alternativeName>
    <alternativeName>
        <fullName evidence="1">PTS system mannitol-specific EIIA component</fullName>
    </alternativeName>
</protein>
<comment type="function">
    <text evidence="1">The phosphoenolpyruvate-dependent sugar phosphotransferase system (sugar PTS), a major carbohydrate active transport system, catalyzes the phosphorylation of incoming sugar substrates concomitantly with their translocation across the cell membrane. The enzyme II CmtAB PTS system is involved in D-mannitol transport.</text>
</comment>
<comment type="subcellular location">
    <subcellularLocation>
        <location evidence="4">Cytoplasm</location>
    </subcellularLocation>
</comment>
<comment type="domain">
    <text evidence="2">The PTS EIIA type-2 domain is phosphorylated by phospho-HPr on a histidyl residue. Then, it transfers the phosphoryl group to the PTS EIIB type-2 domain.</text>
</comment>
<feature type="chain" id="PRO_0000186681" description="Mannitol-specific cryptic phosphotransferase enzyme IIA component">
    <location>
        <begin position="1"/>
        <end position="147"/>
    </location>
</feature>
<feature type="domain" description="PTS EIIA type-2" evidence="2">
    <location>
        <begin position="5"/>
        <end position="147"/>
    </location>
</feature>
<feature type="active site" description="Tele-phosphohistidine intermediate" evidence="2 5">
    <location>
        <position position="67"/>
    </location>
</feature>
<feature type="modified residue" description="Phosphohistidine; by HPr" evidence="5">
    <location>
        <position position="67"/>
    </location>
</feature>
<feature type="helix" evidence="6">
    <location>
        <begin position="4"/>
        <end position="6"/>
    </location>
</feature>
<feature type="strand" evidence="6">
    <location>
        <begin position="12"/>
        <end position="16"/>
    </location>
</feature>
<feature type="helix" evidence="6">
    <location>
        <begin position="21"/>
        <end position="27"/>
    </location>
</feature>
<feature type="helix" evidence="6">
    <location>
        <begin position="30"/>
        <end position="33"/>
    </location>
</feature>
<feature type="turn" evidence="6">
    <location>
        <begin position="34"/>
        <end position="36"/>
    </location>
</feature>
<feature type="helix" evidence="6">
    <location>
        <begin position="40"/>
        <end position="52"/>
    </location>
</feature>
<feature type="strand" evidence="6">
    <location>
        <begin position="58"/>
        <end position="60"/>
    </location>
</feature>
<feature type="helix" evidence="6">
    <location>
        <begin position="70"/>
        <end position="72"/>
    </location>
</feature>
<feature type="strand" evidence="6">
    <location>
        <begin position="78"/>
        <end position="88"/>
    </location>
</feature>
<feature type="strand" evidence="6">
    <location>
        <begin position="97"/>
        <end position="104"/>
    </location>
</feature>
<feature type="helix" evidence="6">
    <location>
        <begin position="108"/>
        <end position="122"/>
    </location>
</feature>
<feature type="helix" evidence="6">
    <location>
        <begin position="125"/>
        <end position="132"/>
    </location>
</feature>
<feature type="helix" evidence="6">
    <location>
        <begin position="137"/>
        <end position="145"/>
    </location>
</feature>
<gene>
    <name type="primary">cmtB</name>
    <name type="ordered locus">b2934</name>
    <name type="ordered locus">JW2901</name>
</gene>
<evidence type="ECO:0000250" key="1">
    <source>
        <dbReference type="UniProtKB" id="P0A0E0"/>
    </source>
</evidence>
<evidence type="ECO:0000255" key="2">
    <source>
        <dbReference type="PROSITE-ProRule" id="PRU00417"/>
    </source>
</evidence>
<evidence type="ECO:0000303" key="3">
    <source>
    </source>
</evidence>
<evidence type="ECO:0000305" key="4"/>
<evidence type="ECO:0000305" key="5">
    <source>
    </source>
</evidence>
<evidence type="ECO:0007829" key="6">
    <source>
        <dbReference type="PDB" id="2OQ3"/>
    </source>
</evidence>
<dbReference type="EMBL" id="X72677">
    <property type="protein sequence ID" value="CAA51228.1"/>
    <property type="molecule type" value="Genomic_DNA"/>
</dbReference>
<dbReference type="EMBL" id="U28377">
    <property type="protein sequence ID" value="AAA69101.1"/>
    <property type="molecule type" value="Genomic_DNA"/>
</dbReference>
<dbReference type="EMBL" id="U00096">
    <property type="protein sequence ID" value="AAC75971.1"/>
    <property type="molecule type" value="Genomic_DNA"/>
</dbReference>
<dbReference type="EMBL" id="AP009048">
    <property type="protein sequence ID" value="BAE76997.1"/>
    <property type="molecule type" value="Genomic_DNA"/>
</dbReference>
<dbReference type="PIR" id="S36122">
    <property type="entry name" value="S36122"/>
</dbReference>
<dbReference type="RefSeq" id="NP_417409.1">
    <property type="nucleotide sequence ID" value="NC_000913.3"/>
</dbReference>
<dbReference type="RefSeq" id="WP_001239650.1">
    <property type="nucleotide sequence ID" value="NZ_SSUV01000019.1"/>
</dbReference>
<dbReference type="PDB" id="2OQ3">
    <property type="method" value="NMR"/>
    <property type="chains" value="A=1-147"/>
</dbReference>
<dbReference type="PDBsum" id="2OQ3"/>
<dbReference type="BMRB" id="P69824"/>
<dbReference type="SMR" id="P69824"/>
<dbReference type="BioGRID" id="4261871">
    <property type="interactions" value="17"/>
</dbReference>
<dbReference type="FunCoup" id="P69824">
    <property type="interactions" value="103"/>
</dbReference>
<dbReference type="IntAct" id="P69824">
    <property type="interactions" value="2"/>
</dbReference>
<dbReference type="STRING" id="511145.b2934"/>
<dbReference type="TCDB" id="4.A.2.1.24">
    <property type="family name" value="the pts fructose-mannitol (fru) family"/>
</dbReference>
<dbReference type="iPTMnet" id="P69824"/>
<dbReference type="PaxDb" id="511145-b2934"/>
<dbReference type="EnsemblBacteria" id="AAC75971">
    <property type="protein sequence ID" value="AAC75971"/>
    <property type="gene ID" value="b2934"/>
</dbReference>
<dbReference type="GeneID" id="75205230"/>
<dbReference type="GeneID" id="945125"/>
<dbReference type="KEGG" id="ecj:JW2901"/>
<dbReference type="KEGG" id="eco:b2934"/>
<dbReference type="KEGG" id="ecoc:C3026_16065"/>
<dbReference type="PATRIC" id="fig|1411691.4.peg.3799"/>
<dbReference type="EchoBASE" id="EB1739"/>
<dbReference type="eggNOG" id="COG1762">
    <property type="taxonomic scope" value="Bacteria"/>
</dbReference>
<dbReference type="HOGENOM" id="CLU_072531_2_0_6"/>
<dbReference type="InParanoid" id="P69824"/>
<dbReference type="OMA" id="NDRAYQW"/>
<dbReference type="OrthoDB" id="1634238at2"/>
<dbReference type="PhylomeDB" id="P69824"/>
<dbReference type="BioCyc" id="EcoCyc:CMTB-MONOMER"/>
<dbReference type="BioCyc" id="MetaCyc:CMTB-MONOMER"/>
<dbReference type="EvolutionaryTrace" id="P69824"/>
<dbReference type="PRO" id="PR:P69824"/>
<dbReference type="Proteomes" id="UP000000625">
    <property type="component" value="Chromosome"/>
</dbReference>
<dbReference type="GO" id="GO:0005737">
    <property type="term" value="C:cytoplasm"/>
    <property type="evidence" value="ECO:0007669"/>
    <property type="project" value="UniProtKB-SubCell"/>
</dbReference>
<dbReference type="GO" id="GO:0016301">
    <property type="term" value="F:kinase activity"/>
    <property type="evidence" value="ECO:0007669"/>
    <property type="project" value="UniProtKB-KW"/>
</dbReference>
<dbReference type="GO" id="GO:0090585">
    <property type="term" value="F:protein-phosphocysteine-L-ascorbate-phosphotransferase system transporter activity"/>
    <property type="evidence" value="ECO:0000318"/>
    <property type="project" value="GO_Central"/>
</dbReference>
<dbReference type="GO" id="GO:0009401">
    <property type="term" value="P:phosphoenolpyruvate-dependent sugar phosphotransferase system"/>
    <property type="evidence" value="ECO:0000247"/>
    <property type="project" value="EcoCyc"/>
</dbReference>
<dbReference type="CDD" id="cd00211">
    <property type="entry name" value="PTS_IIA_fru"/>
    <property type="match status" value="1"/>
</dbReference>
<dbReference type="FunFam" id="3.40.930.10:FF:000010">
    <property type="entry name" value="Mannitol-specific cryptic phosphotransferase enzyme IIA component"/>
    <property type="match status" value="1"/>
</dbReference>
<dbReference type="Gene3D" id="3.40.930.10">
    <property type="entry name" value="Mannitol-specific EII, Chain A"/>
    <property type="match status" value="1"/>
</dbReference>
<dbReference type="InterPro" id="IPR051351">
    <property type="entry name" value="Ascorbate-PTS_EIIA_comp"/>
</dbReference>
<dbReference type="InterPro" id="IPR016152">
    <property type="entry name" value="PTrfase/Anion_transptr"/>
</dbReference>
<dbReference type="InterPro" id="IPR002178">
    <property type="entry name" value="PTS_EIIA_type-2_dom"/>
</dbReference>
<dbReference type="NCBIfam" id="NF007358">
    <property type="entry name" value="PRK09854.1"/>
    <property type="match status" value="1"/>
</dbReference>
<dbReference type="PANTHER" id="PTHR36203">
    <property type="entry name" value="ASCORBATE-SPECIFIC PTS SYSTEM EIIA COMPONENT"/>
    <property type="match status" value="1"/>
</dbReference>
<dbReference type="PANTHER" id="PTHR36203:SF4">
    <property type="entry name" value="MANNITOL-SPECIFIC CRYPTIC PHOSPHOTRANSFERASE ENZYME IIA COMPONENT"/>
    <property type="match status" value="1"/>
</dbReference>
<dbReference type="Pfam" id="PF00359">
    <property type="entry name" value="PTS_EIIA_2"/>
    <property type="match status" value="1"/>
</dbReference>
<dbReference type="SUPFAM" id="SSF55804">
    <property type="entry name" value="Phoshotransferase/anion transport protein"/>
    <property type="match status" value="1"/>
</dbReference>
<dbReference type="PROSITE" id="PS51094">
    <property type="entry name" value="PTS_EIIA_TYPE_2"/>
    <property type="match status" value="1"/>
</dbReference>
<dbReference type="PROSITE" id="PS00372">
    <property type="entry name" value="PTS_EIIA_TYPE_2_HIS"/>
    <property type="match status" value="1"/>
</dbReference>
<reference key="1">
    <citation type="journal article" date="1993" name="Biochim. Biophys. Acta">
        <title>Two open reading frames adjacent to the Escherichia coli K-12 transketolase (tkt) gene show high similarity to the mannitol phosphotransferase system enzymes from Escherichia coli and various Gram-positive bacteria.</title>
        <authorList>
            <person name="Sprenger G.A."/>
        </authorList>
    </citation>
    <scope>NUCLEOTIDE SEQUENCE [GENOMIC DNA]</scope>
    <source>
        <strain>K12</strain>
    </source>
</reference>
<reference key="2">
    <citation type="journal article" date="1997" name="Science">
        <title>The complete genome sequence of Escherichia coli K-12.</title>
        <authorList>
            <person name="Blattner F.R."/>
            <person name="Plunkett G. III"/>
            <person name="Bloch C.A."/>
            <person name="Perna N.T."/>
            <person name="Burland V."/>
            <person name="Riley M."/>
            <person name="Collado-Vides J."/>
            <person name="Glasner J.D."/>
            <person name="Rode C.K."/>
            <person name="Mayhew G.F."/>
            <person name="Gregor J."/>
            <person name="Davis N.W."/>
            <person name="Kirkpatrick H.A."/>
            <person name="Goeden M.A."/>
            <person name="Rose D.J."/>
            <person name="Mau B."/>
            <person name="Shao Y."/>
        </authorList>
    </citation>
    <scope>NUCLEOTIDE SEQUENCE [LARGE SCALE GENOMIC DNA]</scope>
    <source>
        <strain>K12 / MG1655 / ATCC 47076</strain>
    </source>
</reference>
<reference key="3">
    <citation type="journal article" date="2006" name="Mol. Syst. Biol.">
        <title>Highly accurate genome sequences of Escherichia coli K-12 strains MG1655 and W3110.</title>
        <authorList>
            <person name="Hayashi K."/>
            <person name="Morooka N."/>
            <person name="Yamamoto Y."/>
            <person name="Fujita K."/>
            <person name="Isono K."/>
            <person name="Choi S."/>
            <person name="Ohtsubo E."/>
            <person name="Baba T."/>
            <person name="Wanner B.L."/>
            <person name="Mori H."/>
            <person name="Horiuchi T."/>
        </authorList>
    </citation>
    <scope>NUCLEOTIDE SEQUENCE [LARGE SCALE GENOMIC DNA]</scope>
    <source>
        <strain>K12 / W3110 / ATCC 27325 / DSM 5911</strain>
    </source>
</reference>
<reference key="4">
    <citation type="journal article" date="2007" name="Biochem. Biophys. Res. Commun.">
        <title>Solution structure of the cryptic mannitol-specific phosphotransferase enzyme IIA CmtB from Escherichia coli.</title>
        <authorList>
            <person name="Yu C."/>
            <person name="Li Y."/>
            <person name="Xia B."/>
            <person name="Jin C."/>
        </authorList>
    </citation>
    <scope>STRUCTURE BY NMR</scope>
    <scope>ACTIVE SITE</scope>
    <scope>PHOSPHORYLATION AT HIS-67</scope>
</reference>
<sequence>MRLSDYFPESSISVIHSAKDWQEAIDFSMVSLLDKNYISENYIQAIKDSTINNGPYYILAPGVAMPHARPECGALKTGMSLTLLEQGVYFPGNDEPIKLLIGLSAADADSHIGAIQALSELLCEEEILEQLLTASSEKQLADIISRG</sequence>